<proteinExistence type="inferred from homology"/>
<protein>
    <recommendedName>
        <fullName evidence="1">Glutamyl-tRNA reductase</fullName>
        <shortName evidence="1">GluTR</shortName>
        <ecNumber evidence="1">1.2.1.70</ecNumber>
    </recommendedName>
</protein>
<keyword id="KW-0521">NADP</keyword>
<keyword id="KW-0560">Oxidoreductase</keyword>
<keyword id="KW-0627">Porphyrin biosynthesis</keyword>
<gene>
    <name evidence="1" type="primary">hemA</name>
    <name type="ordered locus">A1S_0837</name>
</gene>
<name>HEM1_ACIBT</name>
<reference key="1">
    <citation type="journal article" date="2007" name="Genes Dev.">
        <title>New insights into Acinetobacter baumannii pathogenesis revealed by high-density pyrosequencing and transposon mutagenesis.</title>
        <authorList>
            <person name="Smith M.G."/>
            <person name="Gianoulis T.A."/>
            <person name="Pukatzki S."/>
            <person name="Mekalanos J.J."/>
            <person name="Ornston L.N."/>
            <person name="Gerstein M."/>
            <person name="Snyder M."/>
        </authorList>
    </citation>
    <scope>NUCLEOTIDE SEQUENCE [LARGE SCALE GENOMIC DNA]</scope>
    <source>
        <strain>ATCC 17978 / DSM 105126 / CIP 53.77 / LMG 1025 / NCDC KC755 / 5377</strain>
    </source>
</reference>
<organism>
    <name type="scientific">Acinetobacter baumannii (strain ATCC 17978 / DSM 105126 / CIP 53.77 / LMG 1025 / NCDC KC755 / 5377)</name>
    <dbReference type="NCBI Taxonomy" id="400667"/>
    <lineage>
        <taxon>Bacteria</taxon>
        <taxon>Pseudomonadati</taxon>
        <taxon>Pseudomonadota</taxon>
        <taxon>Gammaproteobacteria</taxon>
        <taxon>Moraxellales</taxon>
        <taxon>Moraxellaceae</taxon>
        <taxon>Acinetobacter</taxon>
        <taxon>Acinetobacter calcoaceticus/baumannii complex</taxon>
    </lineage>
</organism>
<sequence>MSFFALGVNHQTASVELREQIAFNAERLSNLLAEQRHHESLKDLVVVSTCNRTEVYAMAEDAESLLKWLADANNIDVKQLIHHVYRYENAQAITHLMRVASGLDSLMLGEPQILGQVKSALALSKEAQTVSPELNSVFEYAFYAAKRVRSETAVGSHAVSMGYAVAQLALQVFSKPEKLTVMVVAAGEMNSLVAKHLAEMGVAKMIICNRSRERADQLAQEIAHQVEVEIIDFSDLAENLYRADVVSSCTGSLHQVIAYADVKTALKKRRYQQMLMVDLAVPRDIDPKVESLDGVYLYGVDDLQSVIDENLAQRRQAAVEAEVMVNQLATQLITHQKVKEAGSTIHAYRQHSEEISQRELTHALEALHHGGNPEQVLQQFAHRLTQKLIHPTSMLLREAAKAESPDYFEWLQQHLQDVFDHERKPKR</sequence>
<feature type="chain" id="PRO_0000335003" description="Glutamyl-tRNA reductase">
    <location>
        <begin position="1"/>
        <end position="427"/>
    </location>
</feature>
<feature type="active site" description="Nucleophile" evidence="1">
    <location>
        <position position="50"/>
    </location>
</feature>
<feature type="binding site" evidence="1">
    <location>
        <begin position="49"/>
        <end position="52"/>
    </location>
    <ligand>
        <name>substrate</name>
    </ligand>
</feature>
<feature type="binding site" evidence="1">
    <location>
        <position position="105"/>
    </location>
    <ligand>
        <name>substrate</name>
    </ligand>
</feature>
<feature type="binding site" evidence="1">
    <location>
        <begin position="110"/>
        <end position="112"/>
    </location>
    <ligand>
        <name>substrate</name>
    </ligand>
</feature>
<feature type="binding site" evidence="1">
    <location>
        <position position="116"/>
    </location>
    <ligand>
        <name>substrate</name>
    </ligand>
</feature>
<feature type="binding site" evidence="1">
    <location>
        <begin position="185"/>
        <end position="190"/>
    </location>
    <ligand>
        <name>NADP(+)</name>
        <dbReference type="ChEBI" id="CHEBI:58349"/>
    </ligand>
</feature>
<feature type="site" description="Important for activity" evidence="1">
    <location>
        <position position="95"/>
    </location>
</feature>
<comment type="function">
    <text evidence="1">Catalyzes the NADPH-dependent reduction of glutamyl-tRNA(Glu) to glutamate 1-semialdehyde (GSA).</text>
</comment>
<comment type="catalytic activity">
    <reaction evidence="1">
        <text>(S)-4-amino-5-oxopentanoate + tRNA(Glu) + NADP(+) = L-glutamyl-tRNA(Glu) + NADPH + H(+)</text>
        <dbReference type="Rhea" id="RHEA:12344"/>
        <dbReference type="Rhea" id="RHEA-COMP:9663"/>
        <dbReference type="Rhea" id="RHEA-COMP:9680"/>
        <dbReference type="ChEBI" id="CHEBI:15378"/>
        <dbReference type="ChEBI" id="CHEBI:57501"/>
        <dbReference type="ChEBI" id="CHEBI:57783"/>
        <dbReference type="ChEBI" id="CHEBI:58349"/>
        <dbReference type="ChEBI" id="CHEBI:78442"/>
        <dbReference type="ChEBI" id="CHEBI:78520"/>
        <dbReference type="EC" id="1.2.1.70"/>
    </reaction>
</comment>
<comment type="pathway">
    <text evidence="1">Porphyrin-containing compound metabolism; protoporphyrin-IX biosynthesis; 5-aminolevulinate from L-glutamyl-tRNA(Glu): step 1/2.</text>
</comment>
<comment type="subunit">
    <text evidence="1">Homodimer.</text>
</comment>
<comment type="domain">
    <text evidence="1">Possesses an unusual extended V-shaped dimeric structure with each monomer consisting of three distinct domains arranged along a curved 'spinal' alpha-helix. The N-terminal catalytic domain specifically recognizes the glutamate moiety of the substrate. The second domain is the NADPH-binding domain, and the third C-terminal domain is responsible for dimerization.</text>
</comment>
<comment type="miscellaneous">
    <text evidence="1">During catalysis, the active site Cys acts as a nucleophile attacking the alpha-carbonyl group of tRNA-bound glutamate with the formation of a thioester intermediate between enzyme and glutamate, and the concomitant release of tRNA(Glu). The thioester intermediate is finally reduced by direct hydride transfer from NADPH, to form the product GSA.</text>
</comment>
<comment type="similarity">
    <text evidence="1">Belongs to the glutamyl-tRNA reductase family.</text>
</comment>
<evidence type="ECO:0000255" key="1">
    <source>
        <dbReference type="HAMAP-Rule" id="MF_00087"/>
    </source>
</evidence>
<dbReference type="EC" id="1.2.1.70" evidence="1"/>
<dbReference type="EMBL" id="CP000521">
    <property type="protein sequence ID" value="ABO11271.2"/>
    <property type="molecule type" value="Genomic_DNA"/>
</dbReference>
<dbReference type="RefSeq" id="WP_000007423.1">
    <property type="nucleotide sequence ID" value="NZ_CP053098.1"/>
</dbReference>
<dbReference type="SMR" id="A3M2X7"/>
<dbReference type="KEGG" id="acb:A1S_0837"/>
<dbReference type="HOGENOM" id="CLU_035113_2_2_6"/>
<dbReference type="UniPathway" id="UPA00251">
    <property type="reaction ID" value="UER00316"/>
</dbReference>
<dbReference type="GO" id="GO:0008883">
    <property type="term" value="F:glutamyl-tRNA reductase activity"/>
    <property type="evidence" value="ECO:0007669"/>
    <property type="project" value="UniProtKB-UniRule"/>
</dbReference>
<dbReference type="GO" id="GO:0050661">
    <property type="term" value="F:NADP binding"/>
    <property type="evidence" value="ECO:0007669"/>
    <property type="project" value="InterPro"/>
</dbReference>
<dbReference type="GO" id="GO:0019353">
    <property type="term" value="P:protoporphyrinogen IX biosynthetic process from glutamate"/>
    <property type="evidence" value="ECO:0007669"/>
    <property type="project" value="TreeGrafter"/>
</dbReference>
<dbReference type="CDD" id="cd05213">
    <property type="entry name" value="NAD_bind_Glutamyl_tRNA_reduct"/>
    <property type="match status" value="1"/>
</dbReference>
<dbReference type="FunFam" id="3.30.460.30:FF:000001">
    <property type="entry name" value="Glutamyl-tRNA reductase"/>
    <property type="match status" value="1"/>
</dbReference>
<dbReference type="FunFam" id="3.40.50.720:FF:000031">
    <property type="entry name" value="Glutamyl-tRNA reductase"/>
    <property type="match status" value="1"/>
</dbReference>
<dbReference type="Gene3D" id="3.30.460.30">
    <property type="entry name" value="Glutamyl-tRNA reductase, N-terminal domain"/>
    <property type="match status" value="1"/>
</dbReference>
<dbReference type="Gene3D" id="3.40.50.720">
    <property type="entry name" value="NAD(P)-binding Rossmann-like Domain"/>
    <property type="match status" value="1"/>
</dbReference>
<dbReference type="HAMAP" id="MF_00087">
    <property type="entry name" value="Glu_tRNA_reductase"/>
    <property type="match status" value="1"/>
</dbReference>
<dbReference type="InterPro" id="IPR000343">
    <property type="entry name" value="4pyrrol_synth_GluRdtase"/>
</dbReference>
<dbReference type="InterPro" id="IPR015896">
    <property type="entry name" value="4pyrrol_synth_GluRdtase_dimer"/>
</dbReference>
<dbReference type="InterPro" id="IPR015895">
    <property type="entry name" value="4pyrrol_synth_GluRdtase_N"/>
</dbReference>
<dbReference type="InterPro" id="IPR018214">
    <property type="entry name" value="GluRdtase_CS"/>
</dbReference>
<dbReference type="InterPro" id="IPR036453">
    <property type="entry name" value="GluRdtase_dimer_dom_sf"/>
</dbReference>
<dbReference type="InterPro" id="IPR036343">
    <property type="entry name" value="GluRdtase_N_sf"/>
</dbReference>
<dbReference type="InterPro" id="IPR036291">
    <property type="entry name" value="NAD(P)-bd_dom_sf"/>
</dbReference>
<dbReference type="InterPro" id="IPR006151">
    <property type="entry name" value="Shikm_DH/Glu-tRNA_Rdtase"/>
</dbReference>
<dbReference type="NCBIfam" id="TIGR01035">
    <property type="entry name" value="hemA"/>
    <property type="match status" value="1"/>
</dbReference>
<dbReference type="PANTHER" id="PTHR43013">
    <property type="entry name" value="GLUTAMYL-TRNA REDUCTASE"/>
    <property type="match status" value="1"/>
</dbReference>
<dbReference type="PANTHER" id="PTHR43013:SF1">
    <property type="entry name" value="GLUTAMYL-TRNA REDUCTASE"/>
    <property type="match status" value="1"/>
</dbReference>
<dbReference type="Pfam" id="PF00745">
    <property type="entry name" value="GlutR_dimer"/>
    <property type="match status" value="1"/>
</dbReference>
<dbReference type="Pfam" id="PF05201">
    <property type="entry name" value="GlutR_N"/>
    <property type="match status" value="1"/>
</dbReference>
<dbReference type="Pfam" id="PF01488">
    <property type="entry name" value="Shikimate_DH"/>
    <property type="match status" value="1"/>
</dbReference>
<dbReference type="PIRSF" id="PIRSF000445">
    <property type="entry name" value="4pyrrol_synth_GluRdtase"/>
    <property type="match status" value="1"/>
</dbReference>
<dbReference type="SUPFAM" id="SSF69742">
    <property type="entry name" value="Glutamyl tRNA-reductase catalytic, N-terminal domain"/>
    <property type="match status" value="1"/>
</dbReference>
<dbReference type="SUPFAM" id="SSF69075">
    <property type="entry name" value="Glutamyl tRNA-reductase dimerization domain"/>
    <property type="match status" value="1"/>
</dbReference>
<dbReference type="SUPFAM" id="SSF51735">
    <property type="entry name" value="NAD(P)-binding Rossmann-fold domains"/>
    <property type="match status" value="1"/>
</dbReference>
<dbReference type="PROSITE" id="PS00747">
    <property type="entry name" value="GLUTR"/>
    <property type="match status" value="1"/>
</dbReference>
<accession>A3M2X7</accession>